<protein>
    <recommendedName>
        <fullName evidence="1">Glutamate racemase</fullName>
        <ecNumber evidence="1">5.1.1.3</ecNumber>
    </recommendedName>
</protein>
<sequence>MSDQSARPIGLFDSGIGGMTVLREVRRLLPGENLLYLADQARCPYGSRSPDELRAIAAACAAWLIARGAKLVVVACNTASAAALADLRRRFPAIPFVGMVPPVKPAASRTRSGVVGVLATPATLAGDLLHDVISRWAEGVHVIEQACPGLVEQIEEGALDSPETMALLRGYVTPLLDAGADTIVLGCTHYPLLVPQLRAIAGDDTLILDAAPAVAQRVAQIVQERGLMRNVNTLSGAITCATTGDPERFANLIHRLDLPCDRVEQAVITIDA</sequence>
<evidence type="ECO:0000255" key="1">
    <source>
        <dbReference type="HAMAP-Rule" id="MF_00258"/>
    </source>
</evidence>
<keyword id="KW-0133">Cell shape</keyword>
<keyword id="KW-0961">Cell wall biogenesis/degradation</keyword>
<keyword id="KW-0413">Isomerase</keyword>
<keyword id="KW-0573">Peptidoglycan synthesis</keyword>
<dbReference type="EC" id="5.1.1.3" evidence="1"/>
<dbReference type="EMBL" id="CP000686">
    <property type="protein sequence ID" value="ABQ89914.1"/>
    <property type="molecule type" value="Genomic_DNA"/>
</dbReference>
<dbReference type="RefSeq" id="WP_011956264.1">
    <property type="nucleotide sequence ID" value="NC_009523.1"/>
</dbReference>
<dbReference type="SMR" id="A5UTG1"/>
<dbReference type="STRING" id="357808.RoseRS_1521"/>
<dbReference type="KEGG" id="rrs:RoseRS_1521"/>
<dbReference type="eggNOG" id="COG0796">
    <property type="taxonomic scope" value="Bacteria"/>
</dbReference>
<dbReference type="HOGENOM" id="CLU_052344_1_0_0"/>
<dbReference type="OrthoDB" id="9801055at2"/>
<dbReference type="UniPathway" id="UPA00219"/>
<dbReference type="Proteomes" id="UP000006554">
    <property type="component" value="Chromosome"/>
</dbReference>
<dbReference type="GO" id="GO:0008881">
    <property type="term" value="F:glutamate racemase activity"/>
    <property type="evidence" value="ECO:0007669"/>
    <property type="project" value="UniProtKB-UniRule"/>
</dbReference>
<dbReference type="GO" id="GO:0071555">
    <property type="term" value="P:cell wall organization"/>
    <property type="evidence" value="ECO:0007669"/>
    <property type="project" value="UniProtKB-KW"/>
</dbReference>
<dbReference type="GO" id="GO:0009252">
    <property type="term" value="P:peptidoglycan biosynthetic process"/>
    <property type="evidence" value="ECO:0007669"/>
    <property type="project" value="UniProtKB-UniRule"/>
</dbReference>
<dbReference type="GO" id="GO:0008360">
    <property type="term" value="P:regulation of cell shape"/>
    <property type="evidence" value="ECO:0007669"/>
    <property type="project" value="UniProtKB-KW"/>
</dbReference>
<dbReference type="FunFam" id="3.40.50.1860:FF:000001">
    <property type="entry name" value="Glutamate racemase"/>
    <property type="match status" value="1"/>
</dbReference>
<dbReference type="Gene3D" id="3.40.50.1860">
    <property type="match status" value="2"/>
</dbReference>
<dbReference type="HAMAP" id="MF_00258">
    <property type="entry name" value="Glu_racemase"/>
    <property type="match status" value="1"/>
</dbReference>
<dbReference type="InterPro" id="IPR015942">
    <property type="entry name" value="Asp/Glu/hydantoin_racemase"/>
</dbReference>
<dbReference type="InterPro" id="IPR001920">
    <property type="entry name" value="Asp/Glu_race"/>
</dbReference>
<dbReference type="InterPro" id="IPR018187">
    <property type="entry name" value="Asp/Glu_racemase_AS_1"/>
</dbReference>
<dbReference type="InterPro" id="IPR033134">
    <property type="entry name" value="Asp/Glu_racemase_AS_2"/>
</dbReference>
<dbReference type="InterPro" id="IPR004391">
    <property type="entry name" value="Glu_race"/>
</dbReference>
<dbReference type="NCBIfam" id="TIGR00067">
    <property type="entry name" value="glut_race"/>
    <property type="match status" value="1"/>
</dbReference>
<dbReference type="PANTHER" id="PTHR21198">
    <property type="entry name" value="GLUTAMATE RACEMASE"/>
    <property type="match status" value="1"/>
</dbReference>
<dbReference type="PANTHER" id="PTHR21198:SF2">
    <property type="entry name" value="GLUTAMATE RACEMASE"/>
    <property type="match status" value="1"/>
</dbReference>
<dbReference type="Pfam" id="PF01177">
    <property type="entry name" value="Asp_Glu_race"/>
    <property type="match status" value="1"/>
</dbReference>
<dbReference type="SUPFAM" id="SSF53681">
    <property type="entry name" value="Aspartate/glutamate racemase"/>
    <property type="match status" value="2"/>
</dbReference>
<dbReference type="PROSITE" id="PS00923">
    <property type="entry name" value="ASP_GLU_RACEMASE_1"/>
    <property type="match status" value="1"/>
</dbReference>
<dbReference type="PROSITE" id="PS00924">
    <property type="entry name" value="ASP_GLU_RACEMASE_2"/>
    <property type="match status" value="1"/>
</dbReference>
<reference key="1">
    <citation type="submission" date="2007-04" db="EMBL/GenBank/DDBJ databases">
        <title>Complete sequence of Roseiflexus sp. RS-1.</title>
        <authorList>
            <consortium name="US DOE Joint Genome Institute"/>
            <person name="Copeland A."/>
            <person name="Lucas S."/>
            <person name="Lapidus A."/>
            <person name="Barry K."/>
            <person name="Detter J.C."/>
            <person name="Glavina del Rio T."/>
            <person name="Hammon N."/>
            <person name="Israni S."/>
            <person name="Dalin E."/>
            <person name="Tice H."/>
            <person name="Pitluck S."/>
            <person name="Chertkov O."/>
            <person name="Brettin T."/>
            <person name="Bruce D."/>
            <person name="Han C."/>
            <person name="Schmutz J."/>
            <person name="Larimer F."/>
            <person name="Land M."/>
            <person name="Hauser L."/>
            <person name="Kyrpides N."/>
            <person name="Mikhailova N."/>
            <person name="Bryant D.A."/>
            <person name="Richardson P."/>
        </authorList>
    </citation>
    <scope>NUCLEOTIDE SEQUENCE [LARGE SCALE GENOMIC DNA]</scope>
    <source>
        <strain>RS-1</strain>
    </source>
</reference>
<accession>A5UTG1</accession>
<organism>
    <name type="scientific">Roseiflexus sp. (strain RS-1)</name>
    <dbReference type="NCBI Taxonomy" id="357808"/>
    <lineage>
        <taxon>Bacteria</taxon>
        <taxon>Bacillati</taxon>
        <taxon>Chloroflexota</taxon>
        <taxon>Chloroflexia</taxon>
        <taxon>Chloroflexales</taxon>
        <taxon>Roseiflexineae</taxon>
        <taxon>Roseiflexaceae</taxon>
        <taxon>Roseiflexus</taxon>
    </lineage>
</organism>
<name>MURI_ROSS1</name>
<gene>
    <name evidence="1" type="primary">murI</name>
    <name type="ordered locus">RoseRS_1521</name>
</gene>
<proteinExistence type="inferred from homology"/>
<feature type="chain" id="PRO_1000078569" description="Glutamate racemase">
    <location>
        <begin position="1"/>
        <end position="272"/>
    </location>
</feature>
<feature type="active site" description="Proton donor/acceptor" evidence="1">
    <location>
        <position position="76"/>
    </location>
</feature>
<feature type="active site" description="Proton donor/acceptor" evidence="1">
    <location>
        <position position="187"/>
    </location>
</feature>
<feature type="binding site" evidence="1">
    <location>
        <begin position="13"/>
        <end position="14"/>
    </location>
    <ligand>
        <name>substrate</name>
    </ligand>
</feature>
<feature type="binding site" evidence="1">
    <location>
        <begin position="45"/>
        <end position="46"/>
    </location>
    <ligand>
        <name>substrate</name>
    </ligand>
</feature>
<feature type="binding site" evidence="1">
    <location>
        <begin position="77"/>
        <end position="78"/>
    </location>
    <ligand>
        <name>substrate</name>
    </ligand>
</feature>
<feature type="binding site" evidence="1">
    <location>
        <begin position="188"/>
        <end position="189"/>
    </location>
    <ligand>
        <name>substrate</name>
    </ligand>
</feature>
<comment type="function">
    <text evidence="1">Provides the (R)-glutamate required for cell wall biosynthesis.</text>
</comment>
<comment type="catalytic activity">
    <reaction evidence="1">
        <text>L-glutamate = D-glutamate</text>
        <dbReference type="Rhea" id="RHEA:12813"/>
        <dbReference type="ChEBI" id="CHEBI:29985"/>
        <dbReference type="ChEBI" id="CHEBI:29986"/>
        <dbReference type="EC" id="5.1.1.3"/>
    </reaction>
</comment>
<comment type="pathway">
    <text evidence="1">Cell wall biogenesis; peptidoglycan biosynthesis.</text>
</comment>
<comment type="similarity">
    <text evidence="1">Belongs to the aspartate/glutamate racemases family.</text>
</comment>